<sequence>MSGGNDGASWRLSRKPNAPNFDETQEDQWRSLREEVLQSDEDENIPESGDLTIPQLPSAKKAAKKLRKPPSGAKPTPKPKQQTLAQSMSDMDMERLLKRYRIDEDIDIAEDIDMSHLLQLHSDSDDGGDAQEATLTADEFLARLARAEAAPAASIAKEKRESGENVTVVALKDELFNVERDQSAKPPRPRPTPGAGGGAGYRNEETPKQAIELTATLAPQMDAAQFVSPAVPYKSGEMTEGLFYWFDAREQPHTLSVDPGSLFLFGKMAVEKNGRTSYLSCCVRVRNMYRSVFVLPKAGSSQEDVVKEINDICRNQGIEQRRIKFVERYYAFEVPGVPHEKTQWAKLRYPGRYPPLNAKGPFRHILIIMGASSSLLELFLIKRKLKGPSFLRISGLVASANRISHCALEFSVESPKNLRAEDTKLPVPPFTLASIQIHTQLDSKGACNEILIASVAIYKDVNIENTIRYIPDNILTGVRPASMSTPLPIDLESYCSAKGLPGVRRFANERALLDWLAQQLGKIDADMMIGHNFLGFTLDILLRRYQELSISSWSTIGRLDLKRLPRFQGTATNVNQEKETCIGRLVVDSYSLSREHYKTVNYRLLSLADQMQLQGITKGSNNFEPGTSVLTPAMLSASRDIYDVLLQVCNCAVLSTAVVSHLDVIRLTKRLTTIAGNLWSRTLFGARSERIEYLLLHTFHDLKFITPDRYVQNFKRGRDDEEEEDGKRKAKYQGGMVLDPKCGLYSDYILLLDFNSLYPSLIQEFNICFTTVDRESGSEIDVPPPENLICASCAAAGLSAPCLHKCVLPKVIKSLVDSRREVKRLMKIEKDANNLALLEIRQKALKLTANSMYGCLGFEYSRFHAQPLAELVTRQGRLALQSTVDLIPQLNPSLRVIYGDTDSVMIQTGIKNDIKAVRDLGLDLKAKINKRYQSLEIDIDGVFRAILLLKKKKYAALTVTDWQGEGKTYKKEVKGLDMVRRDWCPLSKCVCDSVLSRVLNAEGSEDILDYVMNYMRDVSEKVRAGRYTLDNFVISKSLTKEPEAYRGNSFPHATVALRMKQRKELVRVGDLIPYVICTGDRLSDKAFHVEEVRQNSQLQIDSEWYLSVQIYPPVMRLCEHIQGFSNAQLSEAMGIACHTGAKLEEEEAETMNDFSHSSLFQSRNLEECFPAALSLQVACTHCRLMTPINPHTRVMEVLADQERQRDRFDLYVCVSCRKSLPVDYVANCFTQTCYGIIRQFYQCGSAAAVKAVRTQFTYYRALFDVPHAPGCPARVKDAHYYQARRCLGVDRRLYTLAEAADPAVQEVADPVDPLNAAAETIYKRIDHLFINLDSLFAGI</sequence>
<organism>
    <name type="scientific">Leishmania donovani</name>
    <dbReference type="NCBI Taxonomy" id="5661"/>
    <lineage>
        <taxon>Eukaryota</taxon>
        <taxon>Discoba</taxon>
        <taxon>Euglenozoa</taxon>
        <taxon>Kinetoplastea</taxon>
        <taxon>Metakinetoplastina</taxon>
        <taxon>Trypanosomatida</taxon>
        <taxon>Trypanosomatidae</taxon>
        <taxon>Leishmaniinae</taxon>
        <taxon>Leishmania</taxon>
    </lineage>
</organism>
<proteinExistence type="inferred from homology"/>
<dbReference type="EC" id="2.7.7.7"/>
<dbReference type="EMBL" id="U78172">
    <property type="protein sequence ID" value="AAC47538.1"/>
    <property type="molecule type" value="Genomic_DNA"/>
</dbReference>
<dbReference type="PIR" id="JC5508">
    <property type="entry name" value="JC5508"/>
</dbReference>
<dbReference type="SMR" id="O00874"/>
<dbReference type="VEuPathDB" id="TriTrypDB:LdBPK_161640.1"/>
<dbReference type="VEuPathDB" id="TriTrypDB:LdCL_160021400"/>
<dbReference type="VEuPathDB" id="TriTrypDB:LDHU3_16.1960"/>
<dbReference type="GO" id="GO:0005658">
    <property type="term" value="C:alpha DNA polymerase:primase complex"/>
    <property type="evidence" value="ECO:0007669"/>
    <property type="project" value="TreeGrafter"/>
</dbReference>
<dbReference type="GO" id="GO:0003682">
    <property type="term" value="F:chromatin binding"/>
    <property type="evidence" value="ECO:0007669"/>
    <property type="project" value="TreeGrafter"/>
</dbReference>
<dbReference type="GO" id="GO:0003688">
    <property type="term" value="F:DNA replication origin binding"/>
    <property type="evidence" value="ECO:0007669"/>
    <property type="project" value="TreeGrafter"/>
</dbReference>
<dbReference type="GO" id="GO:0003887">
    <property type="term" value="F:DNA-directed DNA polymerase activity"/>
    <property type="evidence" value="ECO:0007669"/>
    <property type="project" value="UniProtKB-KW"/>
</dbReference>
<dbReference type="GO" id="GO:0000166">
    <property type="term" value="F:nucleotide binding"/>
    <property type="evidence" value="ECO:0007669"/>
    <property type="project" value="InterPro"/>
</dbReference>
<dbReference type="GO" id="GO:0003697">
    <property type="term" value="F:single-stranded DNA binding"/>
    <property type="evidence" value="ECO:0007669"/>
    <property type="project" value="TreeGrafter"/>
</dbReference>
<dbReference type="GO" id="GO:0008270">
    <property type="term" value="F:zinc ion binding"/>
    <property type="evidence" value="ECO:0007669"/>
    <property type="project" value="UniProtKB-KW"/>
</dbReference>
<dbReference type="GO" id="GO:0006273">
    <property type="term" value="P:lagging strand elongation"/>
    <property type="evidence" value="ECO:0007669"/>
    <property type="project" value="TreeGrafter"/>
</dbReference>
<dbReference type="GO" id="GO:0006272">
    <property type="term" value="P:leading strand elongation"/>
    <property type="evidence" value="ECO:0007669"/>
    <property type="project" value="TreeGrafter"/>
</dbReference>
<dbReference type="GO" id="GO:1902975">
    <property type="term" value="P:mitotic DNA replication initiation"/>
    <property type="evidence" value="ECO:0007669"/>
    <property type="project" value="InterPro"/>
</dbReference>
<dbReference type="CDD" id="cd05776">
    <property type="entry name" value="DNA_polB_alpha_exo"/>
    <property type="match status" value="1"/>
</dbReference>
<dbReference type="CDD" id="cd05532">
    <property type="entry name" value="POLBc_alpha"/>
    <property type="match status" value="1"/>
</dbReference>
<dbReference type="FunFam" id="1.10.132.60:FF:000004">
    <property type="entry name" value="DNA polymerase"/>
    <property type="match status" value="1"/>
</dbReference>
<dbReference type="FunFam" id="1.10.287.690:FF:000003">
    <property type="entry name" value="DNA polymerase"/>
    <property type="match status" value="1"/>
</dbReference>
<dbReference type="FunFam" id="3.30.420.10:FF:000187">
    <property type="entry name" value="DNA polymerase"/>
    <property type="match status" value="1"/>
</dbReference>
<dbReference type="FunFam" id="3.30.70.2820:FF:000005">
    <property type="entry name" value="DNA polymerase"/>
    <property type="match status" value="1"/>
</dbReference>
<dbReference type="Gene3D" id="2.40.50.730">
    <property type="match status" value="1"/>
</dbReference>
<dbReference type="Gene3D" id="3.30.70.2820">
    <property type="match status" value="1"/>
</dbReference>
<dbReference type="Gene3D" id="6.10.10.100">
    <property type="match status" value="1"/>
</dbReference>
<dbReference type="Gene3D" id="1.10.132.60">
    <property type="entry name" value="DNA polymerase family B, C-terminal domain"/>
    <property type="match status" value="1"/>
</dbReference>
<dbReference type="Gene3D" id="1.10.287.690">
    <property type="entry name" value="Helix hairpin bin"/>
    <property type="match status" value="1"/>
</dbReference>
<dbReference type="Gene3D" id="3.90.1600.10">
    <property type="entry name" value="Palm domain of DNA polymerase"/>
    <property type="match status" value="1"/>
</dbReference>
<dbReference type="Gene3D" id="3.30.420.10">
    <property type="entry name" value="Ribonuclease H-like superfamily/Ribonuclease H"/>
    <property type="match status" value="1"/>
</dbReference>
<dbReference type="InterPro" id="IPR006172">
    <property type="entry name" value="DNA-dir_DNA_pol_B"/>
</dbReference>
<dbReference type="InterPro" id="IPR017964">
    <property type="entry name" value="DNA-dir_DNA_pol_B_CS"/>
</dbReference>
<dbReference type="InterPro" id="IPR006133">
    <property type="entry name" value="DNA-dir_DNA_pol_B_exonuc"/>
</dbReference>
<dbReference type="InterPro" id="IPR006134">
    <property type="entry name" value="DNA-dir_DNA_pol_B_multi_dom"/>
</dbReference>
<dbReference type="InterPro" id="IPR043502">
    <property type="entry name" value="DNA/RNA_pol_sf"/>
</dbReference>
<dbReference type="InterPro" id="IPR042087">
    <property type="entry name" value="DNA_pol_B_thumb"/>
</dbReference>
<dbReference type="InterPro" id="IPR023211">
    <property type="entry name" value="DNA_pol_palm_dom_sf"/>
</dbReference>
<dbReference type="InterPro" id="IPR045846">
    <property type="entry name" value="POLBc_alpha"/>
</dbReference>
<dbReference type="InterPro" id="IPR012337">
    <property type="entry name" value="RNaseH-like_sf"/>
</dbReference>
<dbReference type="InterPro" id="IPR036397">
    <property type="entry name" value="RNaseH_sf"/>
</dbReference>
<dbReference type="NCBIfam" id="TIGR00592">
    <property type="entry name" value="pol2"/>
    <property type="match status" value="1"/>
</dbReference>
<dbReference type="PANTHER" id="PTHR45861">
    <property type="entry name" value="DNA POLYMERASE ALPHA CATALYTIC SUBUNIT"/>
    <property type="match status" value="1"/>
</dbReference>
<dbReference type="PANTHER" id="PTHR45861:SF1">
    <property type="entry name" value="DNA POLYMERASE ALPHA CATALYTIC SUBUNIT"/>
    <property type="match status" value="1"/>
</dbReference>
<dbReference type="Pfam" id="PF00136">
    <property type="entry name" value="DNA_pol_B"/>
    <property type="match status" value="1"/>
</dbReference>
<dbReference type="Pfam" id="PF03104">
    <property type="entry name" value="DNA_pol_B_exo1"/>
    <property type="match status" value="1"/>
</dbReference>
<dbReference type="PRINTS" id="PR00106">
    <property type="entry name" value="DNAPOLB"/>
</dbReference>
<dbReference type="SMART" id="SM00486">
    <property type="entry name" value="POLBc"/>
    <property type="match status" value="1"/>
</dbReference>
<dbReference type="SUPFAM" id="SSF56672">
    <property type="entry name" value="DNA/RNA polymerases"/>
    <property type="match status" value="1"/>
</dbReference>
<dbReference type="SUPFAM" id="SSF53098">
    <property type="entry name" value="Ribonuclease H-like"/>
    <property type="match status" value="1"/>
</dbReference>
<dbReference type="PROSITE" id="PS00116">
    <property type="entry name" value="DNA_POLYMERASE_B"/>
    <property type="match status" value="1"/>
</dbReference>
<evidence type="ECO:0000250" key="1">
    <source>
        <dbReference type="UniProtKB" id="P09884"/>
    </source>
</evidence>
<evidence type="ECO:0000256" key="2">
    <source>
        <dbReference type="SAM" id="MobiDB-lite"/>
    </source>
</evidence>
<evidence type="ECO:0000305" key="3"/>
<feature type="chain" id="PRO_0000046433" description="DNA polymerase alpha catalytic subunit">
    <location>
        <begin position="1"/>
        <end position="1339"/>
    </location>
</feature>
<feature type="zinc finger region" description="CysA-type">
    <location>
        <begin position="1179"/>
        <end position="1216"/>
    </location>
</feature>
<feature type="region of interest" description="Disordered" evidence="2">
    <location>
        <begin position="1"/>
        <end position="90"/>
    </location>
</feature>
<feature type="region of interest" description="Disordered" evidence="2">
    <location>
        <begin position="177"/>
        <end position="203"/>
    </location>
</feature>
<feature type="short sequence motif" description="CysB motif">
    <location>
        <begin position="1243"/>
        <end position="1271"/>
    </location>
</feature>
<feature type="compositionally biased region" description="Basic and acidic residues" evidence="2">
    <location>
        <begin position="27"/>
        <end position="36"/>
    </location>
</feature>
<feature type="compositionally biased region" description="Polar residues" evidence="2">
    <location>
        <begin position="79"/>
        <end position="89"/>
    </location>
</feature>
<feature type="binding site" evidence="1">
    <location>
        <position position="1179"/>
    </location>
    <ligand>
        <name>Zn(2+)</name>
        <dbReference type="ChEBI" id="CHEBI:29105"/>
        <label>1</label>
    </ligand>
</feature>
<feature type="binding site" evidence="1">
    <location>
        <position position="1182"/>
    </location>
    <ligand>
        <name>Zn(2+)</name>
        <dbReference type="ChEBI" id="CHEBI:29105"/>
        <label>1</label>
    </ligand>
</feature>
<feature type="binding site" evidence="1">
    <location>
        <position position="1213"/>
    </location>
    <ligand>
        <name>Zn(2+)</name>
        <dbReference type="ChEBI" id="CHEBI:29105"/>
        <label>1</label>
    </ligand>
</feature>
<feature type="binding site" evidence="1">
    <location>
        <position position="1216"/>
    </location>
    <ligand>
        <name>Zn(2+)</name>
        <dbReference type="ChEBI" id="CHEBI:29105"/>
        <label>1</label>
    </ligand>
</feature>
<feature type="binding site" evidence="3">
    <location>
        <position position="1233"/>
    </location>
    <ligand>
        <name>Zn(2+)</name>
        <dbReference type="ChEBI" id="CHEBI:29105"/>
        <label>2</label>
    </ligand>
</feature>
<feature type="binding site" evidence="3">
    <location>
        <position position="1243"/>
    </location>
    <ligand>
        <name>Zn(2+)</name>
        <dbReference type="ChEBI" id="CHEBI:29105"/>
        <label>2</label>
    </ligand>
</feature>
<feature type="binding site" evidence="1">
    <location>
        <position position="1271"/>
    </location>
    <ligand>
        <name>Zn(2+)</name>
        <dbReference type="ChEBI" id="CHEBI:29105"/>
        <label>2</label>
    </ligand>
</feature>
<feature type="binding site" evidence="3">
    <location>
        <position position="1286"/>
    </location>
    <ligand>
        <name>Zn(2+)</name>
        <dbReference type="ChEBI" id="CHEBI:29105"/>
        <label>2</label>
    </ligand>
</feature>
<name>DPOLA_LEIDO</name>
<keyword id="KW-0235">DNA replication</keyword>
<keyword id="KW-0238">DNA-binding</keyword>
<keyword id="KW-0239">DNA-directed DNA polymerase</keyword>
<keyword id="KW-0479">Metal-binding</keyword>
<keyword id="KW-0548">Nucleotidyltransferase</keyword>
<keyword id="KW-0539">Nucleus</keyword>
<keyword id="KW-0808">Transferase</keyword>
<keyword id="KW-0862">Zinc</keyword>
<keyword id="KW-0863">Zinc-finger</keyword>
<protein>
    <recommendedName>
        <fullName>DNA polymerase alpha catalytic subunit</fullName>
        <ecNumber>2.7.7.7</ecNumber>
    </recommendedName>
</protein>
<accession>O00874</accession>
<reference key="1">
    <citation type="journal article" date="1997" name="Biochem. Biophys. Res. Commun.">
        <title>Cloning and sequence analysis of the DNA polymerase alpha gene of Leishmania donovani: comparison with the human homologue.</title>
        <authorList>
            <person name="Luton K."/>
            <person name="Johnson A.M."/>
        </authorList>
    </citation>
    <scope>NUCLEOTIDE SEQUENCE [GENOMIC DNA]</scope>
    <source>
        <strain>MHOM/IN/80/DD8</strain>
    </source>
</reference>
<comment type="function">
    <text>Polymerase alpha in a complex with DNA primase is a replicative polymerase.</text>
</comment>
<comment type="catalytic activity">
    <reaction>
        <text>DNA(n) + a 2'-deoxyribonucleoside 5'-triphosphate = DNA(n+1) + diphosphate</text>
        <dbReference type="Rhea" id="RHEA:22508"/>
        <dbReference type="Rhea" id="RHEA-COMP:17339"/>
        <dbReference type="Rhea" id="RHEA-COMP:17340"/>
        <dbReference type="ChEBI" id="CHEBI:33019"/>
        <dbReference type="ChEBI" id="CHEBI:61560"/>
        <dbReference type="ChEBI" id="CHEBI:173112"/>
        <dbReference type="EC" id="2.7.7.7"/>
    </reaction>
</comment>
<comment type="subcellular location">
    <subcellularLocation>
        <location>Nucleus</location>
    </subcellularLocation>
</comment>
<comment type="miscellaneous">
    <text>In eukaryotes there are five DNA polymerases: alpha, beta, gamma, delta, and epsilon which are responsible for different reactions of DNA synthesis.</text>
</comment>
<comment type="similarity">
    <text evidence="3">Belongs to the DNA polymerase type-B family.</text>
</comment>